<proteinExistence type="evidence at protein level"/>
<reference key="1">
    <citation type="journal article" date="2004" name="Genome Res.">
        <title>The status, quality, and expansion of the NIH full-length cDNA project: the Mammalian Gene Collection (MGC).</title>
        <authorList>
            <consortium name="The MGC Project Team"/>
        </authorList>
    </citation>
    <scope>NUCLEOTIDE SEQUENCE [LARGE SCALE MRNA]</scope>
</reference>
<reference key="2">
    <citation type="journal article" date="2005" name="Science">
        <title>The transcriptional landscape of the mammalian genome.</title>
        <authorList>
            <person name="Carninci P."/>
            <person name="Kasukawa T."/>
            <person name="Katayama S."/>
            <person name="Gough J."/>
            <person name="Frith M.C."/>
            <person name="Maeda N."/>
            <person name="Oyama R."/>
            <person name="Ravasi T."/>
            <person name="Lenhard B."/>
            <person name="Wells C."/>
            <person name="Kodzius R."/>
            <person name="Shimokawa K."/>
            <person name="Bajic V.B."/>
            <person name="Brenner S.E."/>
            <person name="Batalov S."/>
            <person name="Forrest A.R."/>
            <person name="Zavolan M."/>
            <person name="Davis M.J."/>
            <person name="Wilming L.G."/>
            <person name="Aidinis V."/>
            <person name="Allen J.E."/>
            <person name="Ambesi-Impiombato A."/>
            <person name="Apweiler R."/>
            <person name="Aturaliya R.N."/>
            <person name="Bailey T.L."/>
            <person name="Bansal M."/>
            <person name="Baxter L."/>
            <person name="Beisel K.W."/>
            <person name="Bersano T."/>
            <person name="Bono H."/>
            <person name="Chalk A.M."/>
            <person name="Chiu K.P."/>
            <person name="Choudhary V."/>
            <person name="Christoffels A."/>
            <person name="Clutterbuck D.R."/>
            <person name="Crowe M.L."/>
            <person name="Dalla E."/>
            <person name="Dalrymple B.P."/>
            <person name="de Bono B."/>
            <person name="Della Gatta G."/>
            <person name="di Bernardo D."/>
            <person name="Down T."/>
            <person name="Engstrom P."/>
            <person name="Fagiolini M."/>
            <person name="Faulkner G."/>
            <person name="Fletcher C.F."/>
            <person name="Fukushima T."/>
            <person name="Furuno M."/>
            <person name="Futaki S."/>
            <person name="Gariboldi M."/>
            <person name="Georgii-Hemming P."/>
            <person name="Gingeras T.R."/>
            <person name="Gojobori T."/>
            <person name="Green R.E."/>
            <person name="Gustincich S."/>
            <person name="Harbers M."/>
            <person name="Hayashi Y."/>
            <person name="Hensch T.K."/>
            <person name="Hirokawa N."/>
            <person name="Hill D."/>
            <person name="Huminiecki L."/>
            <person name="Iacono M."/>
            <person name="Ikeo K."/>
            <person name="Iwama A."/>
            <person name="Ishikawa T."/>
            <person name="Jakt M."/>
            <person name="Kanapin A."/>
            <person name="Katoh M."/>
            <person name="Kawasawa Y."/>
            <person name="Kelso J."/>
            <person name="Kitamura H."/>
            <person name="Kitano H."/>
            <person name="Kollias G."/>
            <person name="Krishnan S.P."/>
            <person name="Kruger A."/>
            <person name="Kummerfeld S.K."/>
            <person name="Kurochkin I.V."/>
            <person name="Lareau L.F."/>
            <person name="Lazarevic D."/>
            <person name="Lipovich L."/>
            <person name="Liu J."/>
            <person name="Liuni S."/>
            <person name="McWilliam S."/>
            <person name="Madan Babu M."/>
            <person name="Madera M."/>
            <person name="Marchionni L."/>
            <person name="Matsuda H."/>
            <person name="Matsuzawa S."/>
            <person name="Miki H."/>
            <person name="Mignone F."/>
            <person name="Miyake S."/>
            <person name="Morris K."/>
            <person name="Mottagui-Tabar S."/>
            <person name="Mulder N."/>
            <person name="Nakano N."/>
            <person name="Nakauchi H."/>
            <person name="Ng P."/>
            <person name="Nilsson R."/>
            <person name="Nishiguchi S."/>
            <person name="Nishikawa S."/>
            <person name="Nori F."/>
            <person name="Ohara O."/>
            <person name="Okazaki Y."/>
            <person name="Orlando V."/>
            <person name="Pang K.C."/>
            <person name="Pavan W.J."/>
            <person name="Pavesi G."/>
            <person name="Pesole G."/>
            <person name="Petrovsky N."/>
            <person name="Piazza S."/>
            <person name="Reed J."/>
            <person name="Reid J.F."/>
            <person name="Ring B.Z."/>
            <person name="Ringwald M."/>
            <person name="Rost B."/>
            <person name="Ruan Y."/>
            <person name="Salzberg S.L."/>
            <person name="Sandelin A."/>
            <person name="Schneider C."/>
            <person name="Schoenbach C."/>
            <person name="Sekiguchi K."/>
            <person name="Semple C.A."/>
            <person name="Seno S."/>
            <person name="Sessa L."/>
            <person name="Sheng Y."/>
            <person name="Shibata Y."/>
            <person name="Shimada H."/>
            <person name="Shimada K."/>
            <person name="Silva D."/>
            <person name="Sinclair B."/>
            <person name="Sperling S."/>
            <person name="Stupka E."/>
            <person name="Sugiura K."/>
            <person name="Sultana R."/>
            <person name="Takenaka Y."/>
            <person name="Taki K."/>
            <person name="Tammoja K."/>
            <person name="Tan S.L."/>
            <person name="Tang S."/>
            <person name="Taylor M.S."/>
            <person name="Tegner J."/>
            <person name="Teichmann S.A."/>
            <person name="Ueda H.R."/>
            <person name="van Nimwegen E."/>
            <person name="Verardo R."/>
            <person name="Wei C.L."/>
            <person name="Yagi K."/>
            <person name="Yamanishi H."/>
            <person name="Zabarovsky E."/>
            <person name="Zhu S."/>
            <person name="Zimmer A."/>
            <person name="Hide W."/>
            <person name="Bult C."/>
            <person name="Grimmond S.M."/>
            <person name="Teasdale R.D."/>
            <person name="Liu E.T."/>
            <person name="Brusic V."/>
            <person name="Quackenbush J."/>
            <person name="Wahlestedt C."/>
            <person name="Mattick J.S."/>
            <person name="Hume D.A."/>
            <person name="Kai C."/>
            <person name="Sasaki D."/>
            <person name="Tomaru Y."/>
            <person name="Fukuda S."/>
            <person name="Kanamori-Katayama M."/>
            <person name="Suzuki M."/>
            <person name="Aoki J."/>
            <person name="Arakawa T."/>
            <person name="Iida J."/>
            <person name="Imamura K."/>
            <person name="Itoh M."/>
            <person name="Kato T."/>
            <person name="Kawaji H."/>
            <person name="Kawagashira N."/>
            <person name="Kawashima T."/>
            <person name="Kojima M."/>
            <person name="Kondo S."/>
            <person name="Konno H."/>
            <person name="Nakano K."/>
            <person name="Ninomiya N."/>
            <person name="Nishio T."/>
            <person name="Okada M."/>
            <person name="Plessy C."/>
            <person name="Shibata K."/>
            <person name="Shiraki T."/>
            <person name="Suzuki S."/>
            <person name="Tagami M."/>
            <person name="Waki K."/>
            <person name="Watahiki A."/>
            <person name="Okamura-Oho Y."/>
            <person name="Suzuki H."/>
            <person name="Kawai J."/>
            <person name="Hayashizaki Y."/>
        </authorList>
    </citation>
    <scope>NUCLEOTIDE SEQUENCE [LARGE SCALE MRNA] OF 220-587</scope>
    <source>
        <strain>C57BL/6J</strain>
        <tissue>Skin</tissue>
    </source>
</reference>
<reference key="3">
    <citation type="journal article" date="2001" name="EMBO J.">
        <title>The tripartite motif family identifies cell compartments.</title>
        <authorList>
            <person name="Reymond A."/>
            <person name="Meroni G."/>
            <person name="Fantozzi A."/>
            <person name="Merla G."/>
            <person name="Cairo S."/>
            <person name="Luzi L."/>
            <person name="Riganelli D."/>
            <person name="Zanaria E."/>
            <person name="Messali S."/>
            <person name="Cainarca S."/>
            <person name="Guffanti A."/>
            <person name="Minucci S."/>
            <person name="Pelicci P.G."/>
            <person name="Ballabio A."/>
        </authorList>
    </citation>
    <scope>NUCLEOTIDE SEQUENCE [MRNA] OF 339-519</scope>
</reference>
<reference key="4">
    <citation type="journal article" date="2010" name="Cell">
        <title>A tissue-specific atlas of mouse protein phosphorylation and expression.</title>
        <authorList>
            <person name="Huttlin E.L."/>
            <person name="Jedrychowski M.P."/>
            <person name="Elias J.E."/>
            <person name="Goswami T."/>
            <person name="Rad R."/>
            <person name="Beausoleil S.A."/>
            <person name="Villen J."/>
            <person name="Haas W."/>
            <person name="Sowa M.E."/>
            <person name="Gygi S.P."/>
        </authorList>
    </citation>
    <scope>PHOSPHORYLATION [LARGE SCALE ANALYSIS] AT SER-104</scope>
    <scope>IDENTIFICATION BY MASS SPECTROMETRY [LARGE SCALE ANALYSIS]</scope>
    <source>
        <tissue>Brown adipose tissue</tissue>
        <tissue>Lung</tissue>
    </source>
</reference>
<reference key="5">
    <citation type="journal article" date="2016" name="Nat. Immunol.">
        <title>Identification of a role for TRIM29 in the control of innate immunity in the respiratory tract.</title>
        <authorList>
            <person name="Xing J."/>
            <person name="Weng L."/>
            <person name="Yuan B."/>
            <person name="Wang Z."/>
            <person name="Jia L."/>
            <person name="Jin R."/>
            <person name="Lu H."/>
            <person name="Li X.C."/>
            <person name="Liu Y.J."/>
            <person name="Zhang Z."/>
        </authorList>
    </citation>
    <scope>FUNCTION</scope>
    <scope>INTERACTION WITH NEMO</scope>
    <scope>SUBCELLULAR LOCATION</scope>
    <scope>TISSUE SPECIFICITY</scope>
    <scope>DISRUPTION PHENOTYPE</scope>
</reference>
<keyword id="KW-0002">3D-structure</keyword>
<keyword id="KW-0175">Coiled coil</keyword>
<keyword id="KW-0963">Cytoplasm</keyword>
<keyword id="KW-0391">Immunity</keyword>
<keyword id="KW-0399">Innate immunity</keyword>
<keyword id="KW-0458">Lysosome</keyword>
<keyword id="KW-0479">Metal-binding</keyword>
<keyword id="KW-0597">Phosphoprotein</keyword>
<keyword id="KW-1185">Reference proteome</keyword>
<keyword id="KW-0862">Zinc</keyword>
<keyword id="KW-0863">Zinc-finger</keyword>
<organism>
    <name type="scientific">Mus musculus</name>
    <name type="common">Mouse</name>
    <dbReference type="NCBI Taxonomy" id="10090"/>
    <lineage>
        <taxon>Eukaryota</taxon>
        <taxon>Metazoa</taxon>
        <taxon>Chordata</taxon>
        <taxon>Craniata</taxon>
        <taxon>Vertebrata</taxon>
        <taxon>Euteleostomi</taxon>
        <taxon>Mammalia</taxon>
        <taxon>Eutheria</taxon>
        <taxon>Euarchontoglires</taxon>
        <taxon>Glires</taxon>
        <taxon>Rodentia</taxon>
        <taxon>Myomorpha</taxon>
        <taxon>Muroidea</taxon>
        <taxon>Muridae</taxon>
        <taxon>Murinae</taxon>
        <taxon>Mus</taxon>
        <taxon>Mus</taxon>
    </lineage>
</organism>
<dbReference type="EMBL" id="BC006699">
    <property type="protein sequence ID" value="AAH06699.1"/>
    <property type="molecule type" value="mRNA"/>
</dbReference>
<dbReference type="EMBL" id="BC027353">
    <property type="protein sequence ID" value="AAH27353.1"/>
    <property type="molecule type" value="mRNA"/>
</dbReference>
<dbReference type="EMBL" id="AK013219">
    <property type="protein sequence ID" value="BAB28721.1"/>
    <property type="molecule type" value="mRNA"/>
</dbReference>
<dbReference type="EMBL" id="AK028448">
    <property type="protein sequence ID" value="BAC25956.1"/>
    <property type="status" value="ALT_INIT"/>
    <property type="molecule type" value="mRNA"/>
</dbReference>
<dbReference type="EMBL" id="AF230390">
    <property type="protein sequence ID" value="AAG50169.1"/>
    <property type="molecule type" value="mRNA"/>
</dbReference>
<dbReference type="CCDS" id="CCDS52775.1"/>
<dbReference type="RefSeq" id="NP_076144.2">
    <property type="nucleotide sequence ID" value="NM_023655.2"/>
</dbReference>
<dbReference type="PDB" id="8SDE">
    <property type="method" value="X-ray"/>
    <property type="resolution" value="2.27 A"/>
    <property type="chains" value="A=259-348"/>
</dbReference>
<dbReference type="PDBsum" id="8SDE"/>
<dbReference type="SMR" id="Q8R2Q0"/>
<dbReference type="BioGRID" id="215196">
    <property type="interactions" value="18"/>
</dbReference>
<dbReference type="FunCoup" id="Q8R2Q0">
    <property type="interactions" value="285"/>
</dbReference>
<dbReference type="IntAct" id="Q8R2Q0">
    <property type="interactions" value="1"/>
</dbReference>
<dbReference type="STRING" id="10090.ENSMUSP00000034511"/>
<dbReference type="iPTMnet" id="Q8R2Q0"/>
<dbReference type="PhosphoSitePlus" id="Q8R2Q0"/>
<dbReference type="PaxDb" id="10090-ENSMUSP00000034511"/>
<dbReference type="PeptideAtlas" id="Q8R2Q0"/>
<dbReference type="ProteomicsDB" id="259315"/>
<dbReference type="Pumba" id="Q8R2Q0"/>
<dbReference type="Antibodypedia" id="18856">
    <property type="antibodies" value="607 antibodies from 39 providers"/>
</dbReference>
<dbReference type="Ensembl" id="ENSMUST00000034511.7">
    <property type="protein sequence ID" value="ENSMUSP00000034511.6"/>
    <property type="gene ID" value="ENSMUSG00000032013.7"/>
</dbReference>
<dbReference type="GeneID" id="72169"/>
<dbReference type="KEGG" id="mmu:72169"/>
<dbReference type="UCSC" id="uc009pbi.2">
    <property type="organism name" value="mouse"/>
</dbReference>
<dbReference type="AGR" id="MGI:1919419"/>
<dbReference type="CTD" id="23650"/>
<dbReference type="MGI" id="MGI:1919419">
    <property type="gene designation" value="Trim29"/>
</dbReference>
<dbReference type="VEuPathDB" id="HostDB:ENSMUSG00000032013"/>
<dbReference type="eggNOG" id="ENOG502QWDV">
    <property type="taxonomic scope" value="Eukaryota"/>
</dbReference>
<dbReference type="GeneTree" id="ENSGT00940000161416"/>
<dbReference type="HOGENOM" id="CLU_039304_0_0_1"/>
<dbReference type="InParanoid" id="Q8R2Q0"/>
<dbReference type="OMA" id="YMNSYTS"/>
<dbReference type="OrthoDB" id="9442597at2759"/>
<dbReference type="PhylomeDB" id="Q8R2Q0"/>
<dbReference type="TreeFam" id="TF351086"/>
<dbReference type="BioGRID-ORCS" id="72169">
    <property type="hits" value="2 hits in 80 CRISPR screens"/>
</dbReference>
<dbReference type="ChiTaRS" id="Trim29">
    <property type="organism name" value="mouse"/>
</dbReference>
<dbReference type="PRO" id="PR:Q8R2Q0"/>
<dbReference type="Proteomes" id="UP000000589">
    <property type="component" value="Chromosome 9"/>
</dbReference>
<dbReference type="RNAct" id="Q8R2Q0">
    <property type="molecule type" value="protein"/>
</dbReference>
<dbReference type="Bgee" id="ENSMUSG00000032013">
    <property type="expression patterns" value="Expressed in lip and 99 other cell types or tissues"/>
</dbReference>
<dbReference type="GO" id="GO:0005737">
    <property type="term" value="C:cytoplasm"/>
    <property type="evidence" value="ECO:0000314"/>
    <property type="project" value="MGI"/>
</dbReference>
<dbReference type="GO" id="GO:0005764">
    <property type="term" value="C:lysosome"/>
    <property type="evidence" value="ECO:0007669"/>
    <property type="project" value="UniProtKB-SubCell"/>
</dbReference>
<dbReference type="GO" id="GO:0042802">
    <property type="term" value="F:identical protein binding"/>
    <property type="evidence" value="ECO:0007669"/>
    <property type="project" value="Ensembl"/>
</dbReference>
<dbReference type="GO" id="GO:0002039">
    <property type="term" value="F:p53 binding"/>
    <property type="evidence" value="ECO:0000314"/>
    <property type="project" value="MGI"/>
</dbReference>
<dbReference type="GO" id="GO:0008270">
    <property type="term" value="F:zinc ion binding"/>
    <property type="evidence" value="ECO:0007669"/>
    <property type="project" value="UniProtKB-KW"/>
</dbReference>
<dbReference type="GO" id="GO:0045087">
    <property type="term" value="P:innate immune response"/>
    <property type="evidence" value="ECO:0007669"/>
    <property type="project" value="UniProtKB-KW"/>
</dbReference>
<dbReference type="GO" id="GO:1900181">
    <property type="term" value="P:negative regulation of protein localization to nucleus"/>
    <property type="evidence" value="ECO:0000314"/>
    <property type="project" value="MGI"/>
</dbReference>
<dbReference type="GO" id="GO:0000122">
    <property type="term" value="P:negative regulation of transcription by RNA polymerase II"/>
    <property type="evidence" value="ECO:0000316"/>
    <property type="project" value="MGI"/>
</dbReference>
<dbReference type="CDD" id="cd19840">
    <property type="entry name" value="Bbox1_TRIM29"/>
    <property type="match status" value="1"/>
</dbReference>
<dbReference type="CDD" id="cd19769">
    <property type="entry name" value="Bbox2_TRIM16-like"/>
    <property type="match status" value="1"/>
</dbReference>
<dbReference type="FunFam" id="4.10.830.40:FF:000003">
    <property type="entry name" value="Tripartite motif containing 29"/>
    <property type="match status" value="1"/>
</dbReference>
<dbReference type="FunFam" id="3.30.160.60:FF:000903">
    <property type="entry name" value="Tripartite motif-containing protein 29"/>
    <property type="match status" value="1"/>
</dbReference>
<dbReference type="Gene3D" id="4.10.830.40">
    <property type="match status" value="1"/>
</dbReference>
<dbReference type="Gene3D" id="3.30.160.60">
    <property type="entry name" value="Classic Zinc Finger"/>
    <property type="match status" value="1"/>
</dbReference>
<dbReference type="InterPro" id="IPR051051">
    <property type="entry name" value="E3_ubiq-ligase_TRIM/RNF"/>
</dbReference>
<dbReference type="InterPro" id="IPR000315">
    <property type="entry name" value="Znf_B-box"/>
</dbReference>
<dbReference type="PANTHER" id="PTHR25465">
    <property type="entry name" value="B-BOX DOMAIN CONTAINING"/>
    <property type="match status" value="1"/>
</dbReference>
<dbReference type="PANTHER" id="PTHR25465:SF7">
    <property type="entry name" value="TRIPARTITE MOTIF-CONTAINING PROTEIN 29"/>
    <property type="match status" value="1"/>
</dbReference>
<dbReference type="Pfam" id="PF00643">
    <property type="entry name" value="zf-B_box"/>
    <property type="match status" value="1"/>
</dbReference>
<dbReference type="SMART" id="SM00336">
    <property type="entry name" value="BBOX"/>
    <property type="match status" value="1"/>
</dbReference>
<dbReference type="SUPFAM" id="SSF57845">
    <property type="entry name" value="B-box zinc-binding domain"/>
    <property type="match status" value="1"/>
</dbReference>
<dbReference type="PROSITE" id="PS50119">
    <property type="entry name" value="ZF_BBOX"/>
    <property type="match status" value="1"/>
</dbReference>
<comment type="function">
    <text evidence="1">Plays a crucial role in the regulation of macrophage activation in response to viral or bacterial infections within the respiratory tract. Mechanistically, TRIM29 interacts with IKBKG/NEMO in the lysosome where it induces its 'Lys-48' ubiquitination and subsequent degradation. In turn, the expression of type I interferons and the production of pro-inflammatory cytokines are inhibited. Additionally, induces the 'Lys-48' ubiquitination of STING1 in a similar way, leading to its degradation.</text>
</comment>
<comment type="subunit">
    <text evidence="1">Interacts with VIM and HINT1. Interacts with IKBKG/NEMO. Interacts with STING1.</text>
</comment>
<comment type="subcellular location">
    <subcellularLocation>
        <location evidence="1">Cytoplasm</location>
    </subcellularLocation>
    <subcellularLocation>
        <location evidence="1">Lysosome</location>
    </subcellularLocation>
    <text evidence="1">Colocalizes with intermediate filaments.</text>
</comment>
<comment type="disruption phenotype">
    <text evidence="5">Absence of TRIM29 enhances macrophage production of type I interferons and protects mice from infection with influenza virus.</text>
</comment>
<comment type="sequence caution" evidence="6">
    <conflict type="erroneous initiation">
        <sequence resource="EMBL-CDS" id="BAC25956"/>
    </conflict>
    <text>Truncated N-terminus.</text>
</comment>
<feature type="chain" id="PRO_0000056243" description="Tripartite motif-containing protein 29">
    <location>
        <begin position="1"/>
        <end position="587"/>
    </location>
</feature>
<feature type="zinc finger region" description="B box-type" evidence="3">
    <location>
        <begin position="220"/>
        <end position="260"/>
    </location>
</feature>
<feature type="region of interest" description="Disordered" evidence="4">
    <location>
        <begin position="1"/>
        <end position="71"/>
    </location>
</feature>
<feature type="coiled-coil region" evidence="2">
    <location>
        <begin position="259"/>
        <end position="348"/>
    </location>
</feature>
<feature type="binding site" evidence="3">
    <location>
        <position position="225"/>
    </location>
    <ligand>
        <name>Zn(2+)</name>
        <dbReference type="ChEBI" id="CHEBI:29105"/>
    </ligand>
</feature>
<feature type="binding site" evidence="3">
    <location>
        <position position="228"/>
    </location>
    <ligand>
        <name>Zn(2+)</name>
        <dbReference type="ChEBI" id="CHEBI:29105"/>
    </ligand>
</feature>
<feature type="binding site" evidence="3">
    <location>
        <position position="247"/>
    </location>
    <ligand>
        <name>Zn(2+)</name>
        <dbReference type="ChEBI" id="CHEBI:29105"/>
    </ligand>
</feature>
<feature type="binding site" evidence="3">
    <location>
        <position position="252"/>
    </location>
    <ligand>
        <name>Zn(2+)</name>
        <dbReference type="ChEBI" id="CHEBI:29105"/>
    </ligand>
</feature>
<feature type="modified residue" description="Phosphoserine" evidence="1">
    <location>
        <position position="21"/>
    </location>
</feature>
<feature type="modified residue" description="Phosphoserine" evidence="1">
    <location>
        <position position="28"/>
    </location>
</feature>
<feature type="modified residue" description="Phosphoserine" evidence="1">
    <location>
        <position position="58"/>
    </location>
</feature>
<feature type="modified residue" description="Phosphoserine" evidence="7">
    <location>
        <position position="104"/>
    </location>
</feature>
<feature type="modified residue" description="Phosphotyrosine" evidence="1">
    <location>
        <position position="106"/>
    </location>
</feature>
<feature type="modified residue" description="Phosphothreonine" evidence="1">
    <location>
        <position position="476"/>
    </location>
</feature>
<feature type="modified residue" description="Phosphoserine" evidence="1">
    <location>
        <position position="489"/>
    </location>
</feature>
<feature type="sequence conflict" description="In Ref. 2." evidence="6" ref="2">
    <original>FEARKCPL</original>
    <variation>SRPENVPC</variation>
    <location>
        <begin position="220"/>
        <end position="227"/>
    </location>
</feature>
<evidence type="ECO:0000250" key="1">
    <source>
        <dbReference type="UniProtKB" id="Q14134"/>
    </source>
</evidence>
<evidence type="ECO:0000255" key="2"/>
<evidence type="ECO:0000255" key="3">
    <source>
        <dbReference type="PROSITE-ProRule" id="PRU00024"/>
    </source>
</evidence>
<evidence type="ECO:0000256" key="4">
    <source>
        <dbReference type="SAM" id="MobiDB-lite"/>
    </source>
</evidence>
<evidence type="ECO:0000269" key="5">
    <source>
    </source>
</evidence>
<evidence type="ECO:0000305" key="6"/>
<evidence type="ECO:0007744" key="7">
    <source>
    </source>
</evidence>
<protein>
    <recommendedName>
        <fullName>Tripartite motif-containing protein 29</fullName>
    </recommendedName>
</protein>
<sequence>MEGADACRSNGASPEARDTRSPPGPSGSLENGTKADSKDTKTTNGHSGEVTEGKTLGSALKSGEGKSGLFSSNEWRRPIIQFVESVDDKGSSYFSMDSAEGRRSPYAGLQLGASKKPPVTFAEKGELRKSIFSEPRKPTVTIVEPGEVRRNSYPRADSSLLARAKSGSEEVLCDSCIGNKQKAVKSCLVCQASFCELHLKPHLEGAAFRDHQLLEPIRDFEARKCPLHGKTMELFCQTDQTCICYLCMFQEHKNHSTVTVEEAKAEKETELSLQKEQLQLKIIEIEDDVEKWQKEKDRIKSFTTNEKAILEQNFRDLVRELEKQKEEVRAALEQREQDAVDQVKVIVDALDERAKVLHEDKQTREQLHNISDSVLFLQEFGALMSNYSLPPPLPTYHVLLEGEGLGQSLGNCKDDLLNVCMRHVEKMCKADLSRNFIERNHMENGGDHRYMNSYTSSYGNEWSTPDTMKRYSMYLTPKGGGRTSYQPSSPSRLSKETNQKNFNNLYGTKGNYTSRVWEYTSTVQNSEDMPTVQGNSSFSLKGFPSLLRSQVPKAQPQTWKSGKQTLLSHYRPFYVNKGSGIGSNEAP</sequence>
<name>TRI29_MOUSE</name>
<accession>Q8R2Q0</accession>
<accession>Q8CEE2</accession>
<accession>Q922Y3</accession>
<accession>Q99PN5</accession>
<accession>Q9CSC9</accession>
<gene>
    <name type="primary">Trim29</name>
</gene>